<evidence type="ECO:0000255" key="1">
    <source>
        <dbReference type="HAMAP-Rule" id="MF_01320"/>
    </source>
</evidence>
<evidence type="ECO:0000256" key="2">
    <source>
        <dbReference type="SAM" id="MobiDB-lite"/>
    </source>
</evidence>
<evidence type="ECO:0000305" key="3"/>
<keyword id="KW-0687">Ribonucleoprotein</keyword>
<keyword id="KW-0689">Ribosomal protein</keyword>
<keyword id="KW-0694">RNA-binding</keyword>
<keyword id="KW-0699">rRNA-binding</keyword>
<protein>
    <recommendedName>
        <fullName evidence="1">Large ribosomal subunit protein uL2</fullName>
    </recommendedName>
    <alternativeName>
        <fullName evidence="3">50S ribosomal protein L2</fullName>
    </alternativeName>
</protein>
<gene>
    <name evidence="1" type="primary">rplB</name>
    <name type="ordered locus">Ccon26_18820</name>
    <name type="ORF">CCC13826_0352</name>
</gene>
<feature type="chain" id="PRO_1000051931" description="Large ribosomal subunit protein uL2">
    <location>
        <begin position="1"/>
        <end position="277"/>
    </location>
</feature>
<feature type="region of interest" description="Disordered" evidence="2">
    <location>
        <begin position="219"/>
        <end position="277"/>
    </location>
</feature>
<feature type="compositionally biased region" description="Basic and acidic residues" evidence="2">
    <location>
        <begin position="231"/>
        <end position="241"/>
    </location>
</feature>
<feature type="compositionally biased region" description="Basic residues" evidence="2">
    <location>
        <begin position="256"/>
        <end position="277"/>
    </location>
</feature>
<name>RL2_CAMC1</name>
<sequence>MAIKSYKPYTPSRRYMTGLSSEDITAKPSVRSLLVKLPATGGRNNNGRITSRHKEAGAKKLYRIIDFKRRKFGIEGKVEAIEYDPNRNCRIALIAYKDGEKRYIIRPNGLNVGDVIASIDEGSLDIKPGNAMKLRFIPVGTIVHNVELKPGKGAQIARSAGGYAQLMGKEEKYVILRMPSGEMRQVLAECMASIGVVGNEDWANITIGKAGRNRYRGIRPQTRGSAMNPVDHPHGGGEGKKNSGRHPVTPWGKPTKGAKTRRKKASDKLIISRRKGK</sequence>
<proteinExistence type="inferred from homology"/>
<dbReference type="EMBL" id="CP000792">
    <property type="protein sequence ID" value="EAT97238.2"/>
    <property type="molecule type" value="Genomic_DNA"/>
</dbReference>
<dbReference type="RefSeq" id="WP_002941522.1">
    <property type="nucleotide sequence ID" value="NC_009802.2"/>
</dbReference>
<dbReference type="SMR" id="A7ZG09"/>
<dbReference type="STRING" id="360104.CCC13826_0352"/>
<dbReference type="GeneID" id="28663432"/>
<dbReference type="KEGG" id="cco:CCC13826_0352"/>
<dbReference type="eggNOG" id="COG0090">
    <property type="taxonomic scope" value="Bacteria"/>
</dbReference>
<dbReference type="HOGENOM" id="CLU_036235_2_1_7"/>
<dbReference type="OrthoDB" id="9778722at2"/>
<dbReference type="Proteomes" id="UP000001121">
    <property type="component" value="Chromosome"/>
</dbReference>
<dbReference type="GO" id="GO:0015934">
    <property type="term" value="C:large ribosomal subunit"/>
    <property type="evidence" value="ECO:0007669"/>
    <property type="project" value="InterPro"/>
</dbReference>
<dbReference type="GO" id="GO:0019843">
    <property type="term" value="F:rRNA binding"/>
    <property type="evidence" value="ECO:0007669"/>
    <property type="project" value="UniProtKB-UniRule"/>
</dbReference>
<dbReference type="GO" id="GO:0003735">
    <property type="term" value="F:structural constituent of ribosome"/>
    <property type="evidence" value="ECO:0007669"/>
    <property type="project" value="InterPro"/>
</dbReference>
<dbReference type="GO" id="GO:0016740">
    <property type="term" value="F:transferase activity"/>
    <property type="evidence" value="ECO:0007669"/>
    <property type="project" value="InterPro"/>
</dbReference>
<dbReference type="GO" id="GO:0002181">
    <property type="term" value="P:cytoplasmic translation"/>
    <property type="evidence" value="ECO:0007669"/>
    <property type="project" value="TreeGrafter"/>
</dbReference>
<dbReference type="FunFam" id="2.30.30.30:FF:000001">
    <property type="entry name" value="50S ribosomal protein L2"/>
    <property type="match status" value="1"/>
</dbReference>
<dbReference type="FunFam" id="2.40.50.140:FF:000003">
    <property type="entry name" value="50S ribosomal protein L2"/>
    <property type="match status" value="1"/>
</dbReference>
<dbReference type="FunFam" id="4.10.950.10:FF:000001">
    <property type="entry name" value="50S ribosomal protein L2"/>
    <property type="match status" value="1"/>
</dbReference>
<dbReference type="Gene3D" id="2.30.30.30">
    <property type="match status" value="1"/>
</dbReference>
<dbReference type="Gene3D" id="2.40.50.140">
    <property type="entry name" value="Nucleic acid-binding proteins"/>
    <property type="match status" value="1"/>
</dbReference>
<dbReference type="Gene3D" id="4.10.950.10">
    <property type="entry name" value="Ribosomal protein L2, domain 3"/>
    <property type="match status" value="1"/>
</dbReference>
<dbReference type="HAMAP" id="MF_01320_B">
    <property type="entry name" value="Ribosomal_uL2_B"/>
    <property type="match status" value="1"/>
</dbReference>
<dbReference type="InterPro" id="IPR012340">
    <property type="entry name" value="NA-bd_OB-fold"/>
</dbReference>
<dbReference type="InterPro" id="IPR014722">
    <property type="entry name" value="Rib_uL2_dom2"/>
</dbReference>
<dbReference type="InterPro" id="IPR002171">
    <property type="entry name" value="Ribosomal_uL2"/>
</dbReference>
<dbReference type="InterPro" id="IPR005880">
    <property type="entry name" value="Ribosomal_uL2_bac/org-type"/>
</dbReference>
<dbReference type="InterPro" id="IPR022669">
    <property type="entry name" value="Ribosomal_uL2_C"/>
</dbReference>
<dbReference type="InterPro" id="IPR022671">
    <property type="entry name" value="Ribosomal_uL2_CS"/>
</dbReference>
<dbReference type="InterPro" id="IPR014726">
    <property type="entry name" value="Ribosomal_uL2_dom3"/>
</dbReference>
<dbReference type="InterPro" id="IPR022666">
    <property type="entry name" value="Ribosomal_uL2_RNA-bd_dom"/>
</dbReference>
<dbReference type="InterPro" id="IPR008991">
    <property type="entry name" value="Translation_prot_SH3-like_sf"/>
</dbReference>
<dbReference type="NCBIfam" id="TIGR01171">
    <property type="entry name" value="rplB_bact"/>
    <property type="match status" value="1"/>
</dbReference>
<dbReference type="PANTHER" id="PTHR13691:SF5">
    <property type="entry name" value="LARGE RIBOSOMAL SUBUNIT PROTEIN UL2M"/>
    <property type="match status" value="1"/>
</dbReference>
<dbReference type="PANTHER" id="PTHR13691">
    <property type="entry name" value="RIBOSOMAL PROTEIN L2"/>
    <property type="match status" value="1"/>
</dbReference>
<dbReference type="Pfam" id="PF00181">
    <property type="entry name" value="Ribosomal_L2"/>
    <property type="match status" value="1"/>
</dbReference>
<dbReference type="Pfam" id="PF03947">
    <property type="entry name" value="Ribosomal_L2_C"/>
    <property type="match status" value="1"/>
</dbReference>
<dbReference type="PIRSF" id="PIRSF002158">
    <property type="entry name" value="Ribosomal_L2"/>
    <property type="match status" value="1"/>
</dbReference>
<dbReference type="SMART" id="SM01383">
    <property type="entry name" value="Ribosomal_L2"/>
    <property type="match status" value="1"/>
</dbReference>
<dbReference type="SMART" id="SM01382">
    <property type="entry name" value="Ribosomal_L2_C"/>
    <property type="match status" value="1"/>
</dbReference>
<dbReference type="SUPFAM" id="SSF50249">
    <property type="entry name" value="Nucleic acid-binding proteins"/>
    <property type="match status" value="1"/>
</dbReference>
<dbReference type="SUPFAM" id="SSF50104">
    <property type="entry name" value="Translation proteins SH3-like domain"/>
    <property type="match status" value="1"/>
</dbReference>
<dbReference type="PROSITE" id="PS00467">
    <property type="entry name" value="RIBOSOMAL_L2"/>
    <property type="match status" value="1"/>
</dbReference>
<reference key="1">
    <citation type="submission" date="2007-10" db="EMBL/GenBank/DDBJ databases">
        <title>Genome sequence of Campylobacter concisus 13826 isolated from human feces.</title>
        <authorList>
            <person name="Fouts D.E."/>
            <person name="Mongodin E.F."/>
            <person name="Puiu D."/>
            <person name="Sebastian Y."/>
            <person name="Miller W.G."/>
            <person name="Mandrell R.E."/>
            <person name="On S."/>
            <person name="Nelson K.E."/>
        </authorList>
    </citation>
    <scope>NUCLEOTIDE SEQUENCE [LARGE SCALE GENOMIC DNA]</scope>
    <source>
        <strain>13826</strain>
    </source>
</reference>
<accession>A7ZG09</accession>
<organism>
    <name type="scientific">Campylobacter concisus (strain 13826)</name>
    <dbReference type="NCBI Taxonomy" id="360104"/>
    <lineage>
        <taxon>Bacteria</taxon>
        <taxon>Pseudomonadati</taxon>
        <taxon>Campylobacterota</taxon>
        <taxon>Epsilonproteobacteria</taxon>
        <taxon>Campylobacterales</taxon>
        <taxon>Campylobacteraceae</taxon>
        <taxon>Campylobacter</taxon>
    </lineage>
</organism>
<comment type="function">
    <text evidence="1">One of the primary rRNA binding proteins. Required for association of the 30S and 50S subunits to form the 70S ribosome, for tRNA binding and peptide bond formation. It has been suggested to have peptidyltransferase activity; this is somewhat controversial. Makes several contacts with the 16S rRNA in the 70S ribosome.</text>
</comment>
<comment type="subunit">
    <text evidence="1">Part of the 50S ribosomal subunit. Forms a bridge to the 30S subunit in the 70S ribosome.</text>
</comment>
<comment type="similarity">
    <text evidence="1">Belongs to the universal ribosomal protein uL2 family.</text>
</comment>